<sequence length="254" mass="27233">MDKLIIGGIEIKNRLFVGSGKYPSNEIIKDVLEGSGSQVITLALRRVDLDNKEEDILQNIPKDVILLPNTSGATNAEEAIRIARIARAMGCGNWIKIEVISDSKYLLPDNEETIKATKVLADEGFIVLPYMCPDIYAGRRLIEAGAAAVMPLGAPIGSNRGLKTKELIQIMIDELDIPIIVDAGIGKPSQAMEAMEMGAAACLVNTAIASSEDPINMARAFKVAVEGGRLAYEAKMGRESKFGNASSPLTGFLD</sequence>
<name>THIG_CLOPE</name>
<feature type="chain" id="PRO_0000162807" description="Thiazole synthase">
    <location>
        <begin position="1"/>
        <end position="254"/>
    </location>
</feature>
<feature type="active site" description="Schiff-base intermediate with DXP" evidence="1">
    <location>
        <position position="96"/>
    </location>
</feature>
<feature type="binding site" evidence="1">
    <location>
        <position position="157"/>
    </location>
    <ligand>
        <name>1-deoxy-D-xylulose 5-phosphate</name>
        <dbReference type="ChEBI" id="CHEBI:57792"/>
    </ligand>
</feature>
<feature type="binding site" evidence="1">
    <location>
        <begin position="183"/>
        <end position="184"/>
    </location>
    <ligand>
        <name>1-deoxy-D-xylulose 5-phosphate</name>
        <dbReference type="ChEBI" id="CHEBI:57792"/>
    </ligand>
</feature>
<feature type="binding site" evidence="1">
    <location>
        <begin position="205"/>
        <end position="206"/>
    </location>
    <ligand>
        <name>1-deoxy-D-xylulose 5-phosphate</name>
        <dbReference type="ChEBI" id="CHEBI:57792"/>
    </ligand>
</feature>
<comment type="function">
    <text evidence="1">Catalyzes the rearrangement of 1-deoxy-D-xylulose 5-phosphate (DXP) to produce the thiazole phosphate moiety of thiamine. Sulfur is provided by the thiocarboxylate moiety of the carrier protein ThiS. In vitro, sulfur can be provided by H(2)S.</text>
</comment>
<comment type="catalytic activity">
    <reaction evidence="1">
        <text>[ThiS sulfur-carrier protein]-C-terminal-Gly-aminoethanethioate + 2-iminoacetate + 1-deoxy-D-xylulose 5-phosphate = [ThiS sulfur-carrier protein]-C-terminal Gly-Gly + 2-[(2R,5Z)-2-carboxy-4-methylthiazol-5(2H)-ylidene]ethyl phosphate + 2 H2O + H(+)</text>
        <dbReference type="Rhea" id="RHEA:26297"/>
        <dbReference type="Rhea" id="RHEA-COMP:12909"/>
        <dbReference type="Rhea" id="RHEA-COMP:19908"/>
        <dbReference type="ChEBI" id="CHEBI:15377"/>
        <dbReference type="ChEBI" id="CHEBI:15378"/>
        <dbReference type="ChEBI" id="CHEBI:57792"/>
        <dbReference type="ChEBI" id="CHEBI:62899"/>
        <dbReference type="ChEBI" id="CHEBI:77846"/>
        <dbReference type="ChEBI" id="CHEBI:90778"/>
        <dbReference type="ChEBI" id="CHEBI:232372"/>
        <dbReference type="EC" id="2.8.1.10"/>
    </reaction>
</comment>
<comment type="pathway">
    <text evidence="1">Cofactor biosynthesis; thiamine diphosphate biosynthesis.</text>
</comment>
<comment type="subunit">
    <text evidence="1">Homotetramer. Forms heterodimers with either ThiH or ThiS.</text>
</comment>
<comment type="subcellular location">
    <subcellularLocation>
        <location evidence="1">Cytoplasm</location>
    </subcellularLocation>
</comment>
<comment type="similarity">
    <text evidence="1">Belongs to the ThiG family.</text>
</comment>
<keyword id="KW-0963">Cytoplasm</keyword>
<keyword id="KW-1185">Reference proteome</keyword>
<keyword id="KW-0704">Schiff base</keyword>
<keyword id="KW-0784">Thiamine biosynthesis</keyword>
<keyword id="KW-0808">Transferase</keyword>
<organism>
    <name type="scientific">Clostridium perfringens (strain 13 / Type A)</name>
    <dbReference type="NCBI Taxonomy" id="195102"/>
    <lineage>
        <taxon>Bacteria</taxon>
        <taxon>Bacillati</taxon>
        <taxon>Bacillota</taxon>
        <taxon>Clostridia</taxon>
        <taxon>Eubacteriales</taxon>
        <taxon>Clostridiaceae</taxon>
        <taxon>Clostridium</taxon>
    </lineage>
</organism>
<proteinExistence type="inferred from homology"/>
<evidence type="ECO:0000255" key="1">
    <source>
        <dbReference type="HAMAP-Rule" id="MF_00443"/>
    </source>
</evidence>
<gene>
    <name evidence="1" type="primary">thiG</name>
    <name type="ordered locus">CPE1601</name>
</gene>
<reference key="1">
    <citation type="journal article" date="2002" name="Proc. Natl. Acad. Sci. U.S.A.">
        <title>Complete genome sequence of Clostridium perfringens, an anaerobic flesh-eater.</title>
        <authorList>
            <person name="Shimizu T."/>
            <person name="Ohtani K."/>
            <person name="Hirakawa H."/>
            <person name="Ohshima K."/>
            <person name="Yamashita A."/>
            <person name="Shiba T."/>
            <person name="Ogasawara N."/>
            <person name="Hattori M."/>
            <person name="Kuhara S."/>
            <person name="Hayashi H."/>
        </authorList>
    </citation>
    <scope>NUCLEOTIDE SEQUENCE [LARGE SCALE GENOMIC DNA]</scope>
    <source>
        <strain>13 / Type A</strain>
    </source>
</reference>
<protein>
    <recommendedName>
        <fullName evidence="1">Thiazole synthase</fullName>
        <ecNumber evidence="1">2.8.1.10</ecNumber>
    </recommendedName>
</protein>
<dbReference type="EC" id="2.8.1.10" evidence="1"/>
<dbReference type="EMBL" id="BA000016">
    <property type="protein sequence ID" value="BAB81307.1"/>
    <property type="molecule type" value="Genomic_DNA"/>
</dbReference>
<dbReference type="RefSeq" id="WP_011010534.1">
    <property type="nucleotide sequence ID" value="NC_003366.1"/>
</dbReference>
<dbReference type="SMR" id="Q8XK02"/>
<dbReference type="STRING" id="195102.gene:10490865"/>
<dbReference type="KEGG" id="cpe:CPE1601"/>
<dbReference type="HOGENOM" id="CLU_062233_1_0_9"/>
<dbReference type="UniPathway" id="UPA00060"/>
<dbReference type="Proteomes" id="UP000000818">
    <property type="component" value="Chromosome"/>
</dbReference>
<dbReference type="GO" id="GO:0005737">
    <property type="term" value="C:cytoplasm"/>
    <property type="evidence" value="ECO:0007669"/>
    <property type="project" value="UniProtKB-SubCell"/>
</dbReference>
<dbReference type="GO" id="GO:1990107">
    <property type="term" value="F:thiazole synthase activity"/>
    <property type="evidence" value="ECO:0007669"/>
    <property type="project" value="UniProtKB-EC"/>
</dbReference>
<dbReference type="GO" id="GO:0009229">
    <property type="term" value="P:thiamine diphosphate biosynthetic process"/>
    <property type="evidence" value="ECO:0007669"/>
    <property type="project" value="UniProtKB-UniRule"/>
</dbReference>
<dbReference type="CDD" id="cd04728">
    <property type="entry name" value="ThiG"/>
    <property type="match status" value="1"/>
</dbReference>
<dbReference type="Gene3D" id="3.20.20.70">
    <property type="entry name" value="Aldolase class I"/>
    <property type="match status" value="1"/>
</dbReference>
<dbReference type="HAMAP" id="MF_00443">
    <property type="entry name" value="ThiG"/>
    <property type="match status" value="1"/>
</dbReference>
<dbReference type="InterPro" id="IPR013785">
    <property type="entry name" value="Aldolase_TIM"/>
</dbReference>
<dbReference type="InterPro" id="IPR033983">
    <property type="entry name" value="Thiazole_synthase_ThiG"/>
</dbReference>
<dbReference type="InterPro" id="IPR008867">
    <property type="entry name" value="ThiG"/>
</dbReference>
<dbReference type="PANTHER" id="PTHR34266">
    <property type="entry name" value="THIAZOLE SYNTHASE"/>
    <property type="match status" value="1"/>
</dbReference>
<dbReference type="PANTHER" id="PTHR34266:SF2">
    <property type="entry name" value="THIAZOLE SYNTHASE"/>
    <property type="match status" value="1"/>
</dbReference>
<dbReference type="Pfam" id="PF05690">
    <property type="entry name" value="ThiG"/>
    <property type="match status" value="1"/>
</dbReference>
<dbReference type="SUPFAM" id="SSF110399">
    <property type="entry name" value="ThiG-like"/>
    <property type="match status" value="1"/>
</dbReference>
<accession>Q8XK02</accession>